<evidence type="ECO:0000250" key="1"/>
<evidence type="ECO:0000255" key="2"/>
<evidence type="ECO:0000255" key="3">
    <source>
        <dbReference type="PROSITE-ProRule" id="PRU01055"/>
    </source>
</evidence>
<sequence>MYTQTLYELSQEAERLLQLSRQQLQLLEKMPLSVPGDDAPQLALPWSQPNIAERHAMLNNELRKISRLEMVLAIVGTMKAGKSTTINAIVGTEVLPNRNRPMTALPTLIRHTPGQKEPVLHFSHVAPIDCLIQQLQQRLRDCDIKHLTDVLEIDKDMRALMQRIENGVAFEKYYLGAQPIFHCLKSLNDLVRLAKALDVDFPFSAYAAIEHIPVIEVEFVHLAGLESYPGQLTLLDTPGPNEAGQPHLQKMLNQQLARASAVLAVLDYTQLKSISDEEVREAILAVGQSVPLYVLVNKFDQQDRNSDDADQVRALISGTLMKGCITPQQIFPVSSMWGYLANRARHELANNGKLPAPEQQRWVEDFAHAALGRRWRHADLADLEHIRHAADQLWEDSLFAQPIQALLHAAYANASLYALRSAAHKLLNYAQQAREYLDFRAHGLNVACEQLRQNIHQVEESLQLLQLNQAQVSGEIKHEIELALTSANHFLRQQQDALNAQLAALFQDDSEPLSEMRTRCETLLQTAQNTISRDFTLRFAELESTLCRVLTDVIRPIEQQVKMELSESGFRPGFHFPVFHGVVPHFNTRQLFSAVISRQDATDEQSTRLGVVRETFSRWLNQPDWGRGNEKSPTETVDYSVLQRALSAEVDLYCQQMAKVLAEQVDESVTAGMNTFFAEFASCLTELQTRLRESLALRQQNESVVRLMQQQLQQTVMTHGWIYTDAQLLRDDIQTLFTAERY</sequence>
<organism>
    <name type="scientific">Escherichia coli</name>
    <dbReference type="NCBI Taxonomy" id="562"/>
    <lineage>
        <taxon>Bacteria</taxon>
        <taxon>Pseudomonadati</taxon>
        <taxon>Pseudomonadota</taxon>
        <taxon>Gammaproteobacteria</taxon>
        <taxon>Enterobacterales</taxon>
        <taxon>Enterobacteriaceae</taxon>
        <taxon>Escherichia</taxon>
    </lineage>
</organism>
<protein>
    <recommendedName>
        <fullName>Clamp-binding protein CrfC</fullName>
    </recommendedName>
    <alternativeName>
        <fullName>Clamp-binding sister replication fork colocalization protein</fullName>
    </alternativeName>
</protein>
<comment type="function">
    <text evidence="1">Important for the colocalization of sister nascent DNA strands after replication fork passage during DNA replication, and for positioning and subsequent partitioning of sister chromosomes. Does not have GTPase activity on its own (By similarity).</text>
</comment>
<comment type="subunit">
    <text evidence="1">Forms homooligomers. Binds to the beta sliding clamp processivity factor (DnaN) in the presence and absence of DNA, may bind to the clamp itself as homodimers or trimers. Homooligomers may be able to bind more than 1 clamp complex (By similarity).</text>
</comment>
<comment type="subcellular location">
    <subcellularLocation>
        <location evidence="1">Cytoplasm</location>
    </subcellularLocation>
    <text evidence="1">About half the protein co-localizes with beta sliding clamp (DnaN) at midcell, the rest without clamp in quarter-cell positions when chromosomes are condensed during DNA replication.</text>
</comment>
<comment type="similarity">
    <text evidence="3">Belongs to the TRAFAC class dynamin-like GTPase superfamily. Dynamin/Fzo/YdjA family.</text>
</comment>
<accession>P0DM86</accession>
<accession>P16694</accession>
<accession>Q2M6J5</accession>
<dbReference type="EMBL" id="J05260">
    <property type="protein sequence ID" value="AAA24336.1"/>
    <property type="molecule type" value="Genomic_DNA"/>
</dbReference>
<dbReference type="PIR" id="S56337">
    <property type="entry name" value="S56337"/>
</dbReference>
<dbReference type="RefSeq" id="WP_000288588.1">
    <property type="nucleotide sequence ID" value="NZ_WVVZ01000009.1"/>
</dbReference>
<dbReference type="STRING" id="585034.ECIAI1_4338"/>
<dbReference type="OMA" id="QRWVQDF"/>
<dbReference type="GO" id="GO:0005737">
    <property type="term" value="C:cytoplasm"/>
    <property type="evidence" value="ECO:0007669"/>
    <property type="project" value="UniProtKB-SubCell"/>
</dbReference>
<dbReference type="GO" id="GO:0005525">
    <property type="term" value="F:GTP binding"/>
    <property type="evidence" value="ECO:0007669"/>
    <property type="project" value="InterPro"/>
</dbReference>
<dbReference type="GO" id="GO:0043022">
    <property type="term" value="F:ribosome binding"/>
    <property type="evidence" value="ECO:0007669"/>
    <property type="project" value="TreeGrafter"/>
</dbReference>
<dbReference type="GO" id="GO:0007059">
    <property type="term" value="P:chromosome segregation"/>
    <property type="evidence" value="ECO:0007669"/>
    <property type="project" value="UniProtKB-KW"/>
</dbReference>
<dbReference type="GO" id="GO:0006260">
    <property type="term" value="P:DNA replication"/>
    <property type="evidence" value="ECO:0007669"/>
    <property type="project" value="UniProtKB-KW"/>
</dbReference>
<dbReference type="CDD" id="cd00882">
    <property type="entry name" value="Ras_like_GTPase"/>
    <property type="match status" value="1"/>
</dbReference>
<dbReference type="Gene3D" id="3.40.50.300">
    <property type="entry name" value="P-loop containing nucleotide triphosphate hydrolases"/>
    <property type="match status" value="1"/>
</dbReference>
<dbReference type="InterPro" id="IPR045063">
    <property type="entry name" value="Dynamin_N"/>
</dbReference>
<dbReference type="InterPro" id="IPR030381">
    <property type="entry name" value="G_DYNAMIN_dom"/>
</dbReference>
<dbReference type="InterPro" id="IPR027417">
    <property type="entry name" value="P-loop_NTPase"/>
</dbReference>
<dbReference type="NCBIfam" id="NF007368">
    <property type="entry name" value="PRK09866.1"/>
    <property type="match status" value="1"/>
</dbReference>
<dbReference type="PANTHER" id="PTHR43834">
    <property type="entry name" value="GTPASE DER"/>
    <property type="match status" value="1"/>
</dbReference>
<dbReference type="PANTHER" id="PTHR43834:SF6">
    <property type="entry name" value="GTPASE DER"/>
    <property type="match status" value="1"/>
</dbReference>
<dbReference type="Pfam" id="PF00350">
    <property type="entry name" value="Dynamin_N"/>
    <property type="match status" value="1"/>
</dbReference>
<dbReference type="SUPFAM" id="SSF52540">
    <property type="entry name" value="P-loop containing nucleoside triphosphate hydrolases"/>
    <property type="match status" value="1"/>
</dbReference>
<dbReference type="PROSITE" id="PS51718">
    <property type="entry name" value="G_DYNAMIN_2"/>
    <property type="match status" value="1"/>
</dbReference>
<reference key="1">
    <citation type="journal article" date="1990" name="J. Biol. Chem.">
        <title>Molecular biology of carbon-phosphorus bond cleavage. Cloning and sequencing of the phn (psiD) genes involved in alkylphosphonate uptake and C-P lyase activity in Escherichia coli B.</title>
        <authorList>
            <person name="Chen C.-M."/>
            <person name="Ye Q.-Z."/>
            <person name="Zhu Z."/>
            <person name="Wanner B.L."/>
            <person name="Walsh C.T."/>
        </authorList>
    </citation>
    <scope>NUCLEOTIDE SEQUENCE [GENOMIC DNA]</scope>
    <source>
        <strain>B</strain>
    </source>
</reference>
<feature type="chain" id="PRO_0000424595" description="Clamp-binding protein CrfC">
    <location>
        <begin position="1"/>
        <end position="742"/>
    </location>
</feature>
<feature type="domain" description="Dynamin-type G" evidence="3">
    <location>
        <begin position="66"/>
        <end position="402"/>
    </location>
</feature>
<feature type="region of interest" description="Clamp-binding consensus" evidence="1">
    <location>
        <begin position="41"/>
        <end position="45"/>
    </location>
</feature>
<feature type="region of interest" description="G1 motif" evidence="3">
    <location>
        <begin position="76"/>
        <end position="83"/>
    </location>
</feature>
<feature type="region of interest" description="G2 motif" evidence="3">
    <location>
        <begin position="102"/>
        <end position="104"/>
    </location>
</feature>
<feature type="region of interest" description="G3 motif" evidence="3">
    <location>
        <begin position="236"/>
        <end position="239"/>
    </location>
</feature>
<feature type="region of interest" description="G4 motif" evidence="3">
    <location>
        <begin position="297"/>
        <end position="300"/>
    </location>
</feature>
<feature type="region of interest" description="G5 motif" evidence="3">
    <location>
        <begin position="331"/>
        <end position="334"/>
    </location>
</feature>
<feature type="coiled-coil region" evidence="2">
    <location>
        <begin position="440"/>
        <end position="472"/>
    </location>
</feature>
<proteinExistence type="inferred from homology"/>
<name>CRFC_ECOLX</name>
<keyword id="KW-0159">Chromosome partition</keyword>
<keyword id="KW-0175">Coiled coil</keyword>
<keyword id="KW-0963">Cytoplasm</keyword>
<keyword id="KW-0235">DNA replication</keyword>
<gene>
    <name type="primary">crfC</name>
    <name type="synonym">yjdA</name>
</gene>